<dbReference type="EMBL" id="CP000410">
    <property type="protein sequence ID" value="ABJ55213.1"/>
    <property type="molecule type" value="Genomic_DNA"/>
</dbReference>
<dbReference type="RefSeq" id="WP_000087873.1">
    <property type="nucleotide sequence ID" value="NZ_JAMLJR010000002.1"/>
</dbReference>
<dbReference type="SMR" id="Q04MH8"/>
<dbReference type="PaxDb" id="373153-SPD_0252"/>
<dbReference type="GeneID" id="93738576"/>
<dbReference type="KEGG" id="spd:SPD_0252"/>
<dbReference type="eggNOG" id="COG0049">
    <property type="taxonomic scope" value="Bacteria"/>
</dbReference>
<dbReference type="HOGENOM" id="CLU_072226_1_1_9"/>
<dbReference type="BioCyc" id="SPNE373153:G1G6V-277-MONOMER"/>
<dbReference type="Proteomes" id="UP000001452">
    <property type="component" value="Chromosome"/>
</dbReference>
<dbReference type="GO" id="GO:0015935">
    <property type="term" value="C:small ribosomal subunit"/>
    <property type="evidence" value="ECO:0007669"/>
    <property type="project" value="InterPro"/>
</dbReference>
<dbReference type="GO" id="GO:0019843">
    <property type="term" value="F:rRNA binding"/>
    <property type="evidence" value="ECO:0007669"/>
    <property type="project" value="UniProtKB-UniRule"/>
</dbReference>
<dbReference type="GO" id="GO:0003735">
    <property type="term" value="F:structural constituent of ribosome"/>
    <property type="evidence" value="ECO:0007669"/>
    <property type="project" value="InterPro"/>
</dbReference>
<dbReference type="GO" id="GO:0000049">
    <property type="term" value="F:tRNA binding"/>
    <property type="evidence" value="ECO:0007669"/>
    <property type="project" value="UniProtKB-UniRule"/>
</dbReference>
<dbReference type="GO" id="GO:0006412">
    <property type="term" value="P:translation"/>
    <property type="evidence" value="ECO:0007669"/>
    <property type="project" value="UniProtKB-UniRule"/>
</dbReference>
<dbReference type="CDD" id="cd14869">
    <property type="entry name" value="uS7_Bacteria"/>
    <property type="match status" value="1"/>
</dbReference>
<dbReference type="FunFam" id="1.10.455.10:FF:000001">
    <property type="entry name" value="30S ribosomal protein S7"/>
    <property type="match status" value="1"/>
</dbReference>
<dbReference type="Gene3D" id="1.10.455.10">
    <property type="entry name" value="Ribosomal protein S7 domain"/>
    <property type="match status" value="1"/>
</dbReference>
<dbReference type="HAMAP" id="MF_00480_B">
    <property type="entry name" value="Ribosomal_uS7_B"/>
    <property type="match status" value="1"/>
</dbReference>
<dbReference type="InterPro" id="IPR000235">
    <property type="entry name" value="Ribosomal_uS7"/>
</dbReference>
<dbReference type="InterPro" id="IPR005717">
    <property type="entry name" value="Ribosomal_uS7_bac/org-type"/>
</dbReference>
<dbReference type="InterPro" id="IPR020606">
    <property type="entry name" value="Ribosomal_uS7_CS"/>
</dbReference>
<dbReference type="InterPro" id="IPR023798">
    <property type="entry name" value="Ribosomal_uS7_dom"/>
</dbReference>
<dbReference type="InterPro" id="IPR036823">
    <property type="entry name" value="Ribosomal_uS7_dom_sf"/>
</dbReference>
<dbReference type="NCBIfam" id="TIGR01029">
    <property type="entry name" value="rpsG_bact"/>
    <property type="match status" value="1"/>
</dbReference>
<dbReference type="PANTHER" id="PTHR11205">
    <property type="entry name" value="RIBOSOMAL PROTEIN S7"/>
    <property type="match status" value="1"/>
</dbReference>
<dbReference type="Pfam" id="PF00177">
    <property type="entry name" value="Ribosomal_S7"/>
    <property type="match status" value="1"/>
</dbReference>
<dbReference type="PIRSF" id="PIRSF002122">
    <property type="entry name" value="RPS7p_RPS7a_RPS5e_RPS7o"/>
    <property type="match status" value="1"/>
</dbReference>
<dbReference type="SUPFAM" id="SSF47973">
    <property type="entry name" value="Ribosomal protein S7"/>
    <property type="match status" value="1"/>
</dbReference>
<dbReference type="PROSITE" id="PS00052">
    <property type="entry name" value="RIBOSOMAL_S7"/>
    <property type="match status" value="1"/>
</dbReference>
<organism>
    <name type="scientific">Streptococcus pneumoniae serotype 2 (strain D39 / NCTC 7466)</name>
    <dbReference type="NCBI Taxonomy" id="373153"/>
    <lineage>
        <taxon>Bacteria</taxon>
        <taxon>Bacillati</taxon>
        <taxon>Bacillota</taxon>
        <taxon>Bacilli</taxon>
        <taxon>Lactobacillales</taxon>
        <taxon>Streptococcaceae</taxon>
        <taxon>Streptococcus</taxon>
    </lineage>
</organism>
<comment type="function">
    <text evidence="1">One of the primary rRNA binding proteins, it binds directly to 16S rRNA where it nucleates assembly of the head domain of the 30S subunit. Is located at the subunit interface close to the decoding center, probably blocks exit of the E-site tRNA.</text>
</comment>
<comment type="subunit">
    <text evidence="1">Part of the 30S ribosomal subunit. Contacts proteins S9 and S11.</text>
</comment>
<comment type="similarity">
    <text evidence="1">Belongs to the universal ribosomal protein uS7 family.</text>
</comment>
<sequence length="156" mass="17756">MSRKNRAPKRDVLPDPLYNSQLVTRLINRVMLDGKRGTAASIVYGAFEQIKEATGNDALEVFETAMENIMPVLEVRARRVGGSNYQVPVEVRPERRTTLGLRWLVTIARLRGEHTMQDRLAKEILDAANNTGAAVKKREDTHRMAEANRAFAHFRW</sequence>
<keyword id="KW-1185">Reference proteome</keyword>
<keyword id="KW-0687">Ribonucleoprotein</keyword>
<keyword id="KW-0689">Ribosomal protein</keyword>
<keyword id="KW-0694">RNA-binding</keyword>
<keyword id="KW-0699">rRNA-binding</keyword>
<keyword id="KW-0820">tRNA-binding</keyword>
<accession>Q04MH8</accession>
<proteinExistence type="inferred from homology"/>
<evidence type="ECO:0000255" key="1">
    <source>
        <dbReference type="HAMAP-Rule" id="MF_00480"/>
    </source>
</evidence>
<evidence type="ECO:0000305" key="2"/>
<protein>
    <recommendedName>
        <fullName evidence="1">Small ribosomal subunit protein uS7</fullName>
    </recommendedName>
    <alternativeName>
        <fullName evidence="2">30S ribosomal protein S7</fullName>
    </alternativeName>
</protein>
<reference key="1">
    <citation type="journal article" date="2007" name="J. Bacteriol.">
        <title>Genome sequence of Avery's virulent serotype 2 strain D39 of Streptococcus pneumoniae and comparison with that of unencapsulated laboratory strain R6.</title>
        <authorList>
            <person name="Lanie J.A."/>
            <person name="Ng W.-L."/>
            <person name="Kazmierczak K.M."/>
            <person name="Andrzejewski T.M."/>
            <person name="Davidsen T.M."/>
            <person name="Wayne K.J."/>
            <person name="Tettelin H."/>
            <person name="Glass J.I."/>
            <person name="Winkler M.E."/>
        </authorList>
    </citation>
    <scope>NUCLEOTIDE SEQUENCE [LARGE SCALE GENOMIC DNA]</scope>
    <source>
        <strain>D39 / NCTC 7466</strain>
    </source>
</reference>
<name>RS7_STRP2</name>
<feature type="chain" id="PRO_1000014298" description="Small ribosomal subunit protein uS7">
    <location>
        <begin position="1"/>
        <end position="156"/>
    </location>
</feature>
<gene>
    <name evidence="1" type="primary">rpsG</name>
    <name type="ordered locus">SPD_0252</name>
</gene>